<feature type="chain" id="PRO_0000416218" description="7-carboxy-7-deazaguanine synthase">
    <location>
        <begin position="1"/>
        <end position="252"/>
    </location>
</feature>
<feature type="domain" description="Radical SAM core" evidence="2">
    <location>
        <begin position="28"/>
        <end position="251"/>
    </location>
</feature>
<feature type="binding site" evidence="1">
    <location>
        <begin position="22"/>
        <end position="24"/>
    </location>
    <ligand>
        <name>substrate</name>
    </ligand>
</feature>
<feature type="binding site" evidence="1">
    <location>
        <position position="37"/>
    </location>
    <ligand>
        <name>substrate</name>
    </ligand>
</feature>
<feature type="binding site" evidence="1">
    <location>
        <position position="41"/>
    </location>
    <ligand>
        <name>[4Fe-4S] cluster</name>
        <dbReference type="ChEBI" id="CHEBI:49883"/>
        <note>4Fe-4S-S-AdoMet</note>
    </ligand>
</feature>
<feature type="binding site" evidence="1">
    <location>
        <position position="45"/>
    </location>
    <ligand>
        <name>[4Fe-4S] cluster</name>
        <dbReference type="ChEBI" id="CHEBI:49883"/>
        <note>4Fe-4S-S-AdoMet</note>
    </ligand>
</feature>
<feature type="binding site" evidence="1">
    <location>
        <position position="48"/>
    </location>
    <ligand>
        <name>[4Fe-4S] cluster</name>
        <dbReference type="ChEBI" id="CHEBI:49883"/>
        <note>4Fe-4S-S-AdoMet</note>
    </ligand>
</feature>
<feature type="binding site" evidence="1">
    <location>
        <position position="102"/>
    </location>
    <ligand>
        <name>substrate</name>
    </ligand>
</feature>
<feature type="binding site" evidence="1">
    <location>
        <position position="104"/>
    </location>
    <ligand>
        <name>S-adenosyl-L-methionine</name>
        <dbReference type="ChEBI" id="CHEBI:59789"/>
    </ligand>
</feature>
<accession>Q8TX58</accession>
<protein>
    <recommendedName>
        <fullName evidence="1">7-carboxy-7-deazaguanine synthase</fullName>
        <shortName evidence="1">CDG synthase</shortName>
        <ecNumber evidence="1">4.3.99.3</ecNumber>
    </recommendedName>
    <alternativeName>
        <fullName evidence="1">Archaeosine biosynthesis protein QueE</fullName>
    </alternativeName>
</protein>
<keyword id="KW-0004">4Fe-4S</keyword>
<keyword id="KW-0408">Iron</keyword>
<keyword id="KW-0411">Iron-sulfur</keyword>
<keyword id="KW-0456">Lyase</keyword>
<keyword id="KW-0460">Magnesium</keyword>
<keyword id="KW-0479">Metal-binding</keyword>
<keyword id="KW-1185">Reference proteome</keyword>
<keyword id="KW-0949">S-adenosyl-L-methionine</keyword>
<dbReference type="EC" id="4.3.99.3" evidence="1"/>
<dbReference type="EMBL" id="AE009439">
    <property type="protein sequence ID" value="AAM02031.1"/>
    <property type="molecule type" value="Genomic_DNA"/>
</dbReference>
<dbReference type="SMR" id="Q8TX58"/>
<dbReference type="FunCoup" id="Q8TX58">
    <property type="interactions" value="1"/>
</dbReference>
<dbReference type="STRING" id="190192.MK0818"/>
<dbReference type="PaxDb" id="190192-MK0818"/>
<dbReference type="EnsemblBacteria" id="AAM02031">
    <property type="protein sequence ID" value="AAM02031"/>
    <property type="gene ID" value="MK0818"/>
</dbReference>
<dbReference type="KEGG" id="mka:MK0818"/>
<dbReference type="PATRIC" id="fig|190192.8.peg.860"/>
<dbReference type="HOGENOM" id="CLU_066739_1_0_2"/>
<dbReference type="InParanoid" id="Q8TX58"/>
<dbReference type="UniPathway" id="UPA00391"/>
<dbReference type="Proteomes" id="UP000001826">
    <property type="component" value="Chromosome"/>
</dbReference>
<dbReference type="GO" id="GO:0051539">
    <property type="term" value="F:4 iron, 4 sulfur cluster binding"/>
    <property type="evidence" value="ECO:0007669"/>
    <property type="project" value="UniProtKB-UniRule"/>
</dbReference>
<dbReference type="GO" id="GO:0016840">
    <property type="term" value="F:carbon-nitrogen lyase activity"/>
    <property type="evidence" value="ECO:0007669"/>
    <property type="project" value="UniProtKB-UniRule"/>
</dbReference>
<dbReference type="GO" id="GO:0000287">
    <property type="term" value="F:magnesium ion binding"/>
    <property type="evidence" value="ECO:0007669"/>
    <property type="project" value="UniProtKB-UniRule"/>
</dbReference>
<dbReference type="GO" id="GO:1904047">
    <property type="term" value="F:S-adenosyl-L-methionine binding"/>
    <property type="evidence" value="ECO:0007669"/>
    <property type="project" value="UniProtKB-UniRule"/>
</dbReference>
<dbReference type="CDD" id="cd01335">
    <property type="entry name" value="Radical_SAM"/>
    <property type="match status" value="1"/>
</dbReference>
<dbReference type="Gene3D" id="3.20.20.70">
    <property type="entry name" value="Aldolase class I"/>
    <property type="match status" value="1"/>
</dbReference>
<dbReference type="HAMAP" id="MF_00917">
    <property type="entry name" value="QueE"/>
    <property type="match status" value="1"/>
</dbReference>
<dbReference type="InterPro" id="IPR024924">
    <property type="entry name" value="7-CO-7-deazaguanine_synth-like"/>
</dbReference>
<dbReference type="InterPro" id="IPR013785">
    <property type="entry name" value="Aldolase_TIM"/>
</dbReference>
<dbReference type="InterPro" id="IPR007197">
    <property type="entry name" value="rSAM"/>
</dbReference>
<dbReference type="PANTHER" id="PTHR42836">
    <property type="entry name" value="7-CARBOXY-7-DEAZAGUANINE SYNTHASE"/>
    <property type="match status" value="1"/>
</dbReference>
<dbReference type="PANTHER" id="PTHR42836:SF1">
    <property type="entry name" value="7-CARBOXY-7-DEAZAGUANINE SYNTHASE"/>
    <property type="match status" value="1"/>
</dbReference>
<dbReference type="Pfam" id="PF13353">
    <property type="entry name" value="Fer4_12"/>
    <property type="match status" value="1"/>
</dbReference>
<dbReference type="Pfam" id="PF04055">
    <property type="entry name" value="Radical_SAM"/>
    <property type="match status" value="1"/>
</dbReference>
<dbReference type="PIRSF" id="PIRSF000370">
    <property type="entry name" value="QueE"/>
    <property type="match status" value="1"/>
</dbReference>
<dbReference type="SFLD" id="SFLDS00029">
    <property type="entry name" value="Radical_SAM"/>
    <property type="match status" value="1"/>
</dbReference>
<dbReference type="SUPFAM" id="SSF102114">
    <property type="entry name" value="Radical SAM enzymes"/>
    <property type="match status" value="1"/>
</dbReference>
<dbReference type="PROSITE" id="PS51918">
    <property type="entry name" value="RADICAL_SAM"/>
    <property type="match status" value="1"/>
</dbReference>
<organism>
    <name type="scientific">Methanopyrus kandleri (strain AV19 / DSM 6324 / JCM 9639 / NBRC 100938)</name>
    <dbReference type="NCBI Taxonomy" id="190192"/>
    <lineage>
        <taxon>Archaea</taxon>
        <taxon>Methanobacteriati</taxon>
        <taxon>Methanobacteriota</taxon>
        <taxon>Methanomada group</taxon>
        <taxon>Methanopyri</taxon>
        <taxon>Methanopyrales</taxon>
        <taxon>Methanopyraceae</taxon>
        <taxon>Methanopyrus</taxon>
    </lineage>
</organism>
<name>QUEE_METKA</name>
<proteinExistence type="inferred from homology"/>
<comment type="function">
    <text evidence="1">Catalyzes the complex heterocyclic radical-mediated conversion of 6-carboxy-5,6,7,8-tetrahydropterin (CPH4) to 7-carboxy-7-deazaguanine (CDG), a step common to the biosynthetic pathways of all 7-deazapurine-containing compounds.</text>
</comment>
<comment type="catalytic activity">
    <reaction evidence="1">
        <text>6-carboxy-5,6,7,8-tetrahydropterin + H(+) = 7-carboxy-7-deazaguanine + NH4(+)</text>
        <dbReference type="Rhea" id="RHEA:27974"/>
        <dbReference type="ChEBI" id="CHEBI:15378"/>
        <dbReference type="ChEBI" id="CHEBI:28938"/>
        <dbReference type="ChEBI" id="CHEBI:61032"/>
        <dbReference type="ChEBI" id="CHEBI:61036"/>
        <dbReference type="EC" id="4.3.99.3"/>
    </reaction>
</comment>
<comment type="cofactor">
    <cofactor evidence="1">
        <name>[4Fe-4S] cluster</name>
        <dbReference type="ChEBI" id="CHEBI:49883"/>
    </cofactor>
    <text evidence="1">Binds 1 [4Fe-4S] cluster. The cluster is coordinated with 3 cysteines and an exchangeable S-adenosyl-L-methionine.</text>
</comment>
<comment type="cofactor">
    <cofactor evidence="1">
        <name>S-adenosyl-L-methionine</name>
        <dbReference type="ChEBI" id="CHEBI:59789"/>
    </cofactor>
    <text evidence="1">Binds 1 S-adenosyl-L-methionine per subunit.</text>
</comment>
<comment type="cofactor">
    <cofactor evidence="1">
        <name>Mg(2+)</name>
        <dbReference type="ChEBI" id="CHEBI:18420"/>
    </cofactor>
</comment>
<comment type="pathway">
    <text evidence="1">Purine metabolism; 7-cyano-7-deazaguanine biosynthesis.</text>
</comment>
<comment type="subunit">
    <text evidence="1">Homodimer.</text>
</comment>
<comment type="similarity">
    <text evidence="1">Belongs to the radical SAM superfamily. 7-carboxy-7-deazaguanine synthase family.</text>
</comment>
<evidence type="ECO:0000255" key="1">
    <source>
        <dbReference type="HAMAP-Rule" id="MF_00917"/>
    </source>
</evidence>
<evidence type="ECO:0000255" key="2">
    <source>
        <dbReference type="PROSITE-ProRule" id="PRU01266"/>
    </source>
</evidence>
<sequence length="252" mass="27940">MGTGGRGRPTPGLNVYEVFLSLQGEGKFVGEPQAFVRFSGCNLRCAYCDEPASRSSRRRALIRRVSGEVELELPVPCGPEDVVEVLVELEDLEDTFGTVSLTGGEPLVQPWGALKELIERLRERGFRVLLETNASLPDRAPLIDELADVVSADVKLPSHGPNMDDFPDRCLRFLERISAEVYAKVVLVDEECYQHAESALKGLHRLGVEPIYLQPATGSEHDLEDLWELAGLVNADVRVLPQVHKLVDFIPR</sequence>
<gene>
    <name evidence="1" type="primary">queE</name>
    <name type="ordered locus">MK0818</name>
</gene>
<reference key="1">
    <citation type="journal article" date="2002" name="Proc. Natl. Acad. Sci. U.S.A.">
        <title>The complete genome of hyperthermophile Methanopyrus kandleri AV19 and monophyly of archaeal methanogens.</title>
        <authorList>
            <person name="Slesarev A.I."/>
            <person name="Mezhevaya K.V."/>
            <person name="Makarova K.S."/>
            <person name="Polushin N.N."/>
            <person name="Shcherbinina O.V."/>
            <person name="Shakhova V.V."/>
            <person name="Belova G.I."/>
            <person name="Aravind L."/>
            <person name="Natale D.A."/>
            <person name="Rogozin I.B."/>
            <person name="Tatusov R.L."/>
            <person name="Wolf Y.I."/>
            <person name="Stetter K.O."/>
            <person name="Malykh A.G."/>
            <person name="Koonin E.V."/>
            <person name="Kozyavkin S.A."/>
        </authorList>
    </citation>
    <scope>NUCLEOTIDE SEQUENCE [LARGE SCALE GENOMIC DNA]</scope>
    <source>
        <strain>AV19 / DSM 6324 / JCM 9639 / NBRC 100938</strain>
    </source>
</reference>